<name>Y393_CERS4</name>
<protein>
    <recommendedName>
        <fullName evidence="1">UPF0102 protein RHOS4_03930</fullName>
    </recommendedName>
</protein>
<feature type="chain" id="PRO_0000336245" description="UPF0102 protein RHOS4_03930">
    <location>
        <begin position="1"/>
        <end position="117"/>
    </location>
</feature>
<comment type="similarity">
    <text evidence="1">Belongs to the UPF0102 family.</text>
</comment>
<gene>
    <name type="ordered locus">RHOS4_03930</name>
    <name type="ORF">RSP_1814</name>
</gene>
<keyword id="KW-1185">Reference proteome</keyword>
<evidence type="ECO:0000255" key="1">
    <source>
        <dbReference type="HAMAP-Rule" id="MF_00048"/>
    </source>
</evidence>
<reference key="1">
    <citation type="submission" date="2005-09" db="EMBL/GenBank/DDBJ databases">
        <title>Complete sequence of chromosome 1 of Rhodobacter sphaeroides 2.4.1.</title>
        <authorList>
            <person name="Copeland A."/>
            <person name="Lucas S."/>
            <person name="Lapidus A."/>
            <person name="Barry K."/>
            <person name="Detter J.C."/>
            <person name="Glavina T."/>
            <person name="Hammon N."/>
            <person name="Israni S."/>
            <person name="Pitluck S."/>
            <person name="Richardson P."/>
            <person name="Mackenzie C."/>
            <person name="Choudhary M."/>
            <person name="Larimer F."/>
            <person name="Hauser L.J."/>
            <person name="Land M."/>
            <person name="Donohue T.J."/>
            <person name="Kaplan S."/>
        </authorList>
    </citation>
    <scope>NUCLEOTIDE SEQUENCE [LARGE SCALE GENOMIC DNA]</scope>
    <source>
        <strain>ATCC 17023 / DSM 158 / JCM 6121 / CCUG 31486 / LMG 2827 / NBRC 12203 / NCIMB 8253 / ATH 2.4.1.</strain>
    </source>
</reference>
<accession>Q3J5H3</accession>
<proteinExistence type="inferred from homology"/>
<organism>
    <name type="scientific">Cereibacter sphaeroides (strain ATCC 17023 / DSM 158 / JCM 6121 / CCUG 31486 / LMG 2827 / NBRC 12203 / NCIMB 8253 / ATH 2.4.1.)</name>
    <name type="common">Rhodobacter sphaeroides</name>
    <dbReference type="NCBI Taxonomy" id="272943"/>
    <lineage>
        <taxon>Bacteria</taxon>
        <taxon>Pseudomonadati</taxon>
        <taxon>Pseudomonadota</taxon>
        <taxon>Alphaproteobacteria</taxon>
        <taxon>Rhodobacterales</taxon>
        <taxon>Paracoccaceae</taxon>
        <taxon>Cereibacter</taxon>
    </lineage>
</organism>
<dbReference type="EMBL" id="CP000143">
    <property type="protein sequence ID" value="ABA77961.1"/>
    <property type="molecule type" value="Genomic_DNA"/>
</dbReference>
<dbReference type="RefSeq" id="WP_002722671.1">
    <property type="nucleotide sequence ID" value="NZ_CP030271.1"/>
</dbReference>
<dbReference type="RefSeq" id="YP_351862.1">
    <property type="nucleotide sequence ID" value="NC_007493.2"/>
</dbReference>
<dbReference type="SMR" id="Q3J5H3"/>
<dbReference type="STRING" id="272943.RSP_1814"/>
<dbReference type="EnsemblBacteria" id="ABA77961">
    <property type="protein sequence ID" value="ABA77961"/>
    <property type="gene ID" value="RSP_1814"/>
</dbReference>
<dbReference type="GeneID" id="3719060"/>
<dbReference type="KEGG" id="rsp:RSP_1814"/>
<dbReference type="PATRIC" id="fig|272943.9.peg.697"/>
<dbReference type="eggNOG" id="COG0792">
    <property type="taxonomic scope" value="Bacteria"/>
</dbReference>
<dbReference type="OrthoDB" id="9812968at2"/>
<dbReference type="PhylomeDB" id="Q3J5H3"/>
<dbReference type="Proteomes" id="UP000002703">
    <property type="component" value="Chromosome 1"/>
</dbReference>
<dbReference type="GO" id="GO:0003676">
    <property type="term" value="F:nucleic acid binding"/>
    <property type="evidence" value="ECO:0007669"/>
    <property type="project" value="InterPro"/>
</dbReference>
<dbReference type="Gene3D" id="3.40.1350.10">
    <property type="match status" value="1"/>
</dbReference>
<dbReference type="HAMAP" id="MF_00048">
    <property type="entry name" value="UPF0102"/>
    <property type="match status" value="1"/>
</dbReference>
<dbReference type="InterPro" id="IPR011335">
    <property type="entry name" value="Restrct_endonuc-II-like"/>
</dbReference>
<dbReference type="InterPro" id="IPR011856">
    <property type="entry name" value="tRNA_endonuc-like_dom_sf"/>
</dbReference>
<dbReference type="InterPro" id="IPR003509">
    <property type="entry name" value="UPF0102_YraN-like"/>
</dbReference>
<dbReference type="NCBIfam" id="NF011269">
    <property type="entry name" value="PRK14676.1"/>
    <property type="match status" value="1"/>
</dbReference>
<dbReference type="PANTHER" id="PTHR34039">
    <property type="entry name" value="UPF0102 PROTEIN YRAN"/>
    <property type="match status" value="1"/>
</dbReference>
<dbReference type="PANTHER" id="PTHR34039:SF1">
    <property type="entry name" value="UPF0102 PROTEIN YRAN"/>
    <property type="match status" value="1"/>
</dbReference>
<dbReference type="Pfam" id="PF02021">
    <property type="entry name" value="UPF0102"/>
    <property type="match status" value="1"/>
</dbReference>
<dbReference type="SUPFAM" id="SSF52980">
    <property type="entry name" value="Restriction endonuclease-like"/>
    <property type="match status" value="1"/>
</dbReference>
<sequence length="117" mass="12674">MSGEVSYYAGQTAEEAVARIYDRSGRPVAARRWRGVSGEIDLIAREGAEVIFIEVKKSTSHAAAAARLSRRQMDRIYGAASEFLAGEPRGQLTASRFDVALVDALGRVEIIENAFAA</sequence>